<evidence type="ECO:0000255" key="1">
    <source>
        <dbReference type="HAMAP-Rule" id="MF_01710"/>
    </source>
</evidence>
<evidence type="ECO:0000305" key="2"/>
<comment type="function">
    <text evidence="1">ATP-binding (A) component of a common energy-coupling factor (ECF) ABC-transporter complex. Unlike classic ABC transporters this ECF transporter provides the energy necessary to transport a number of different substrates.</text>
</comment>
<comment type="subunit">
    <text evidence="1">Forms a stable energy-coupling factor (ECF) transporter complex composed of 2 membrane-embedded substrate-binding proteins (S component), 2 ATP-binding proteins (A component) and 2 transmembrane proteins (T component).</text>
</comment>
<comment type="subcellular location">
    <subcellularLocation>
        <location evidence="1">Cell membrane</location>
        <topology evidence="1">Peripheral membrane protein</topology>
    </subcellularLocation>
</comment>
<comment type="similarity">
    <text evidence="1">Belongs to the ABC transporter superfamily. Energy-coupling factor EcfA family.</text>
</comment>
<comment type="sequence caution" evidence="2">
    <conflict type="erroneous initiation">
        <sequence resource="EMBL-CDS" id="AAM25405"/>
    </conflict>
    <text>Extended N-terminus.</text>
</comment>
<feature type="chain" id="PRO_0000092118" description="Energy-coupling factor transporter ATP-binding protein EcfA1">
    <location>
        <begin position="1"/>
        <end position="277"/>
    </location>
</feature>
<feature type="domain" description="ABC transporter" evidence="1">
    <location>
        <begin position="5"/>
        <end position="243"/>
    </location>
</feature>
<feature type="binding site" evidence="1">
    <location>
        <begin position="42"/>
        <end position="49"/>
    </location>
    <ligand>
        <name>ATP</name>
        <dbReference type="ChEBI" id="CHEBI:30616"/>
    </ligand>
</feature>
<protein>
    <recommendedName>
        <fullName evidence="1">Energy-coupling factor transporter ATP-binding protein EcfA1</fullName>
        <shortName evidence="1">ECF transporter A component EcfA1</shortName>
        <ecNumber evidence="1">7.-.-.-</ecNumber>
    </recommendedName>
</protein>
<organism>
    <name type="scientific">Caldanaerobacter subterraneus subsp. tengcongensis (strain DSM 15242 / JCM 11007 / NBRC 100824 / MB4)</name>
    <name type="common">Thermoanaerobacter tengcongensis</name>
    <dbReference type="NCBI Taxonomy" id="273068"/>
    <lineage>
        <taxon>Bacteria</taxon>
        <taxon>Bacillati</taxon>
        <taxon>Bacillota</taxon>
        <taxon>Clostridia</taxon>
        <taxon>Thermoanaerobacterales</taxon>
        <taxon>Thermoanaerobacteraceae</taxon>
        <taxon>Caldanaerobacter</taxon>
    </lineage>
</organism>
<proteinExistence type="inferred from homology"/>
<name>ECFA1_CALS4</name>
<accession>Q8R7Y4</accession>
<dbReference type="EC" id="7.-.-.-" evidence="1"/>
<dbReference type="EMBL" id="AE008691">
    <property type="protein sequence ID" value="AAM25405.1"/>
    <property type="status" value="ALT_INIT"/>
    <property type="molecule type" value="Genomic_DNA"/>
</dbReference>
<dbReference type="RefSeq" id="WP_041587365.1">
    <property type="nucleotide sequence ID" value="NC_003869.1"/>
</dbReference>
<dbReference type="SMR" id="Q8R7Y4"/>
<dbReference type="STRING" id="273068.TTE2261"/>
<dbReference type="KEGG" id="tte:TTE2261"/>
<dbReference type="eggNOG" id="COG1122">
    <property type="taxonomic scope" value="Bacteria"/>
</dbReference>
<dbReference type="HOGENOM" id="CLU_000604_1_22_9"/>
<dbReference type="OrthoDB" id="9814634at2"/>
<dbReference type="Proteomes" id="UP000000555">
    <property type="component" value="Chromosome"/>
</dbReference>
<dbReference type="GO" id="GO:0043190">
    <property type="term" value="C:ATP-binding cassette (ABC) transporter complex"/>
    <property type="evidence" value="ECO:0007669"/>
    <property type="project" value="TreeGrafter"/>
</dbReference>
<dbReference type="GO" id="GO:0005524">
    <property type="term" value="F:ATP binding"/>
    <property type="evidence" value="ECO:0007669"/>
    <property type="project" value="UniProtKB-KW"/>
</dbReference>
<dbReference type="GO" id="GO:0016887">
    <property type="term" value="F:ATP hydrolysis activity"/>
    <property type="evidence" value="ECO:0007669"/>
    <property type="project" value="InterPro"/>
</dbReference>
<dbReference type="GO" id="GO:0042626">
    <property type="term" value="F:ATPase-coupled transmembrane transporter activity"/>
    <property type="evidence" value="ECO:0007669"/>
    <property type="project" value="TreeGrafter"/>
</dbReference>
<dbReference type="CDD" id="cd03225">
    <property type="entry name" value="ABC_cobalt_CbiO_domain1"/>
    <property type="match status" value="1"/>
</dbReference>
<dbReference type="FunFam" id="3.40.50.300:FF:000224">
    <property type="entry name" value="Energy-coupling factor transporter ATP-binding protein EcfA"/>
    <property type="match status" value="1"/>
</dbReference>
<dbReference type="Gene3D" id="3.40.50.300">
    <property type="entry name" value="P-loop containing nucleotide triphosphate hydrolases"/>
    <property type="match status" value="1"/>
</dbReference>
<dbReference type="InterPro" id="IPR003593">
    <property type="entry name" value="AAA+_ATPase"/>
</dbReference>
<dbReference type="InterPro" id="IPR003439">
    <property type="entry name" value="ABC_transporter-like_ATP-bd"/>
</dbReference>
<dbReference type="InterPro" id="IPR017871">
    <property type="entry name" value="ABC_transporter-like_CS"/>
</dbReference>
<dbReference type="InterPro" id="IPR015856">
    <property type="entry name" value="ABC_transpr_CbiO/EcfA_su"/>
</dbReference>
<dbReference type="InterPro" id="IPR050095">
    <property type="entry name" value="ECF_ABC_transporter_ATP-bd"/>
</dbReference>
<dbReference type="InterPro" id="IPR030947">
    <property type="entry name" value="EcfA_1"/>
</dbReference>
<dbReference type="InterPro" id="IPR027417">
    <property type="entry name" value="P-loop_NTPase"/>
</dbReference>
<dbReference type="NCBIfam" id="TIGR04520">
    <property type="entry name" value="ECF_ATPase_1"/>
    <property type="match status" value="1"/>
</dbReference>
<dbReference type="NCBIfam" id="NF010167">
    <property type="entry name" value="PRK13648.1"/>
    <property type="match status" value="1"/>
</dbReference>
<dbReference type="PANTHER" id="PTHR43553:SF24">
    <property type="entry name" value="ENERGY-COUPLING FACTOR TRANSPORTER ATP-BINDING PROTEIN ECFA1"/>
    <property type="match status" value="1"/>
</dbReference>
<dbReference type="PANTHER" id="PTHR43553">
    <property type="entry name" value="HEAVY METAL TRANSPORTER"/>
    <property type="match status" value="1"/>
</dbReference>
<dbReference type="Pfam" id="PF00005">
    <property type="entry name" value="ABC_tran"/>
    <property type="match status" value="1"/>
</dbReference>
<dbReference type="SMART" id="SM00382">
    <property type="entry name" value="AAA"/>
    <property type="match status" value="1"/>
</dbReference>
<dbReference type="SUPFAM" id="SSF52540">
    <property type="entry name" value="P-loop containing nucleoside triphosphate hydrolases"/>
    <property type="match status" value="1"/>
</dbReference>
<dbReference type="PROSITE" id="PS00211">
    <property type="entry name" value="ABC_TRANSPORTER_1"/>
    <property type="match status" value="1"/>
</dbReference>
<dbReference type="PROSITE" id="PS50893">
    <property type="entry name" value="ABC_TRANSPORTER_2"/>
    <property type="match status" value="1"/>
</dbReference>
<dbReference type="PROSITE" id="PS51246">
    <property type="entry name" value="CBIO"/>
    <property type="match status" value="1"/>
</dbReference>
<sequence>MAFIIRAQNVSFCYSEGESKSPPVLKDINLQFEKGQFIGIIGHNGSGKSTLAKHFNALLLPTKGNVYVKDMDTKDAKHLWDIRQTAGLVFQNPDNQIVAAIVEEDVAFGPENLGIPPEEIRKRVEYALKAVGMWEYKDFPPHMLSGGQKQRVAIAGIIAMKPECIVLDEPTAMLDPIGRREVISTIKKLNKEEGITVILITHFMEEVVDADRVIVMDDGKVVLDGTPKEVFKEVEVLKKIGLDVPQVTELAHQLRKEGIDIPSDILTIEEMVEFICR</sequence>
<reference key="1">
    <citation type="journal article" date="2002" name="Genome Res.">
        <title>A complete sequence of the T. tengcongensis genome.</title>
        <authorList>
            <person name="Bao Q."/>
            <person name="Tian Y."/>
            <person name="Li W."/>
            <person name="Xu Z."/>
            <person name="Xuan Z."/>
            <person name="Hu S."/>
            <person name="Dong W."/>
            <person name="Yang J."/>
            <person name="Chen Y."/>
            <person name="Xue Y."/>
            <person name="Xu Y."/>
            <person name="Lai X."/>
            <person name="Huang L."/>
            <person name="Dong X."/>
            <person name="Ma Y."/>
            <person name="Ling L."/>
            <person name="Tan H."/>
            <person name="Chen R."/>
            <person name="Wang J."/>
            <person name="Yu J."/>
            <person name="Yang H."/>
        </authorList>
    </citation>
    <scope>NUCLEOTIDE SEQUENCE [LARGE SCALE GENOMIC DNA]</scope>
    <source>
        <strain>DSM 15242 / JCM 11007 / NBRC 100824 / MB4</strain>
    </source>
</reference>
<keyword id="KW-0067">ATP-binding</keyword>
<keyword id="KW-1003">Cell membrane</keyword>
<keyword id="KW-0472">Membrane</keyword>
<keyword id="KW-0547">Nucleotide-binding</keyword>
<keyword id="KW-1185">Reference proteome</keyword>
<keyword id="KW-1278">Translocase</keyword>
<keyword id="KW-0813">Transport</keyword>
<gene>
    <name evidence="1" type="primary">ecfA1</name>
    <name type="synonym">cbiO1</name>
    <name type="ordered locus">TTE2261</name>
</gene>